<dbReference type="EMBL" id="U76299">
    <property type="protein sequence ID" value="AAC32039.1"/>
    <property type="status" value="ALT_FRAME"/>
    <property type="molecule type" value="mRNA"/>
</dbReference>
<dbReference type="EMBL" id="U90428">
    <property type="protein sequence ID" value="AAB50232.1"/>
    <property type="molecule type" value="Genomic_DNA"/>
</dbReference>
<dbReference type="EMBL" id="U57320">
    <property type="protein sequence ID" value="AAB47973.1"/>
    <property type="molecule type" value="mRNA"/>
</dbReference>
<dbReference type="EMBL" id="AC003672">
    <property type="protein sequence ID" value="AAC27480.1"/>
    <property type="molecule type" value="Genomic_DNA"/>
</dbReference>
<dbReference type="EMBL" id="CP002685">
    <property type="protein sequence ID" value="AEC10467.1"/>
    <property type="molecule type" value="Genomic_DNA"/>
</dbReference>
<dbReference type="EMBL" id="AY049292">
    <property type="protein sequence ID" value="AAK83634.1"/>
    <property type="molecule type" value="mRNA"/>
</dbReference>
<dbReference type="EMBL" id="AY093758">
    <property type="protein sequence ID" value="AAM10382.1"/>
    <property type="molecule type" value="mRNA"/>
</dbReference>
<dbReference type="EMBL" id="AY085929">
    <property type="protein sequence ID" value="AAM63141.1"/>
    <property type="molecule type" value="mRNA"/>
</dbReference>
<dbReference type="EMBL" id="Z26202">
    <property type="protein sequence ID" value="CAA81189.1"/>
    <property type="status" value="ALT_FRAME"/>
    <property type="molecule type" value="mRNA"/>
</dbReference>
<dbReference type="PIR" id="T01605">
    <property type="entry name" value="T01605"/>
</dbReference>
<dbReference type="PIR" id="T52408">
    <property type="entry name" value="T52408"/>
</dbReference>
<dbReference type="PIR" id="T52409">
    <property type="entry name" value="T52409"/>
</dbReference>
<dbReference type="PIR" id="T52410">
    <property type="entry name" value="T52410"/>
</dbReference>
<dbReference type="RefSeq" id="NP_182006.1">
    <property type="nucleotide sequence ID" value="NM_130043.3"/>
</dbReference>
<dbReference type="SMR" id="O80517"/>
<dbReference type="BioGRID" id="4424">
    <property type="interactions" value="3"/>
</dbReference>
<dbReference type="FunCoup" id="O80517">
    <property type="interactions" value="9"/>
</dbReference>
<dbReference type="IntAct" id="O80517">
    <property type="interactions" value="1"/>
</dbReference>
<dbReference type="STRING" id="3702.O80517"/>
<dbReference type="GlyGen" id="O80517">
    <property type="glycosylation" value="6 sites"/>
</dbReference>
<dbReference type="PaxDb" id="3702-AT2G44790.1"/>
<dbReference type="ProteomicsDB" id="240747"/>
<dbReference type="EnsemblPlants" id="AT2G44790.1">
    <property type="protein sequence ID" value="AT2G44790.1"/>
    <property type="gene ID" value="AT2G44790"/>
</dbReference>
<dbReference type="GeneID" id="819088"/>
<dbReference type="Gramene" id="AT2G44790.1">
    <property type="protein sequence ID" value="AT2G44790.1"/>
    <property type="gene ID" value="AT2G44790"/>
</dbReference>
<dbReference type="KEGG" id="ath:AT2G44790"/>
<dbReference type="Araport" id="AT2G44790"/>
<dbReference type="TAIR" id="AT2G44790">
    <property type="gene designation" value="UCC2"/>
</dbReference>
<dbReference type="eggNOG" id="ENOG502S1ER">
    <property type="taxonomic scope" value="Eukaryota"/>
</dbReference>
<dbReference type="HOGENOM" id="CLU_058719_2_5_1"/>
<dbReference type="InParanoid" id="O80517"/>
<dbReference type="OMA" id="GHYYICP"/>
<dbReference type="PhylomeDB" id="O80517"/>
<dbReference type="PRO" id="PR:O80517"/>
<dbReference type="Proteomes" id="UP000006548">
    <property type="component" value="Chromosome 2"/>
</dbReference>
<dbReference type="ExpressionAtlas" id="O80517">
    <property type="expression patterns" value="baseline and differential"/>
</dbReference>
<dbReference type="GO" id="GO:0005886">
    <property type="term" value="C:plasma membrane"/>
    <property type="evidence" value="ECO:0007669"/>
    <property type="project" value="UniProtKB-SubCell"/>
</dbReference>
<dbReference type="GO" id="GO:0009506">
    <property type="term" value="C:plasmodesma"/>
    <property type="evidence" value="ECO:0007005"/>
    <property type="project" value="TAIR"/>
</dbReference>
<dbReference type="GO" id="GO:0098552">
    <property type="term" value="C:side of membrane"/>
    <property type="evidence" value="ECO:0007669"/>
    <property type="project" value="UniProtKB-KW"/>
</dbReference>
<dbReference type="GO" id="GO:0009055">
    <property type="term" value="F:electron transfer activity"/>
    <property type="evidence" value="ECO:0007669"/>
    <property type="project" value="InterPro"/>
</dbReference>
<dbReference type="GO" id="GO:0046872">
    <property type="term" value="F:metal ion binding"/>
    <property type="evidence" value="ECO:0007669"/>
    <property type="project" value="UniProtKB-KW"/>
</dbReference>
<dbReference type="FunFam" id="2.60.40.420:FF:000003">
    <property type="entry name" value="Blue copper"/>
    <property type="match status" value="1"/>
</dbReference>
<dbReference type="Gene3D" id="2.60.40.420">
    <property type="entry name" value="Cupredoxins - blue copper proteins"/>
    <property type="match status" value="1"/>
</dbReference>
<dbReference type="InterPro" id="IPR008972">
    <property type="entry name" value="Cupredoxin"/>
</dbReference>
<dbReference type="InterPro" id="IPR039391">
    <property type="entry name" value="Phytocyanin-like"/>
</dbReference>
<dbReference type="InterPro" id="IPR003245">
    <property type="entry name" value="Phytocyanin_dom"/>
</dbReference>
<dbReference type="PANTHER" id="PTHR33021">
    <property type="entry name" value="BLUE COPPER PROTEIN"/>
    <property type="match status" value="1"/>
</dbReference>
<dbReference type="PANTHER" id="PTHR33021:SF350">
    <property type="entry name" value="UCLACYANIN-2"/>
    <property type="match status" value="1"/>
</dbReference>
<dbReference type="Pfam" id="PF02298">
    <property type="entry name" value="Cu_bind_like"/>
    <property type="match status" value="1"/>
</dbReference>
<dbReference type="SUPFAM" id="SSF49503">
    <property type="entry name" value="Cupredoxins"/>
    <property type="match status" value="1"/>
</dbReference>
<dbReference type="PROSITE" id="PS51485">
    <property type="entry name" value="PHYTOCYANIN"/>
    <property type="match status" value="1"/>
</dbReference>
<evidence type="ECO:0000255" key="1"/>
<evidence type="ECO:0000255" key="2">
    <source>
        <dbReference type="PROSITE-ProRule" id="PRU00818"/>
    </source>
</evidence>
<evidence type="ECO:0000256" key="3">
    <source>
        <dbReference type="SAM" id="MobiDB-lite"/>
    </source>
</evidence>
<evidence type="ECO:0000305" key="4"/>
<sequence>MAMNGLSKMAVAAATALLLVLTIVPGAVAVTYTIEWTTGVDYSGWATGKTFRVGDILEFKYGSSHTVDVVDKAGYDGCDASSSTENHSDGDTKIDLKTVGINYFICSTPGHCRTNGGMKLAVNVVAGSAGPPATPTPPSSTPGTPTTPESPPSGGSPTPTTPTPGAGSTSPPPPPKASGASKGVMSYVLVGVSMVLGYGLWM</sequence>
<keyword id="KW-1003">Cell membrane</keyword>
<keyword id="KW-0186">Copper</keyword>
<keyword id="KW-0249">Electron transport</keyword>
<keyword id="KW-0325">Glycoprotein</keyword>
<keyword id="KW-0336">GPI-anchor</keyword>
<keyword id="KW-0449">Lipoprotein</keyword>
<keyword id="KW-0472">Membrane</keyword>
<keyword id="KW-0479">Metal-binding</keyword>
<keyword id="KW-1185">Reference proteome</keyword>
<keyword id="KW-0732">Signal</keyword>
<keyword id="KW-0813">Transport</keyword>
<reference key="1">
    <citation type="journal article" date="1998" name="Protein Sci.">
        <title>Uclacyanins, stellacyanins, and plantacyanins are distinct subfamilies of phytocyanins: plant-specific mononuclear blue copper proteins.</title>
        <authorList>
            <person name="Nersissian A.M."/>
            <person name="Immoos C."/>
            <person name="Hill M.G."/>
            <person name="Hart P.J."/>
            <person name="Williams G."/>
            <person name="Herrmann R.G."/>
            <person name="Valentine J.S."/>
        </authorList>
    </citation>
    <scope>NUCLEOTIDE SEQUENCE [MRNA]</scope>
    <scope>GENE FAMILY</scope>
    <scope>NOMENCLATURE</scope>
</reference>
<reference key="2">
    <citation type="submission" date="1997-02" db="EMBL/GenBank/DDBJ databases">
        <title>Isolation of blue copper-binding protein II cDNA in Arabidopsis thaliana.</title>
        <authorList>
            <person name="Kim C.H."/>
            <person name="Cho Y.H."/>
            <person name="Hong Y.-N."/>
        </authorList>
    </citation>
    <scope>NUCLEOTIDE SEQUENCE [MRNA]</scope>
    <source>
        <strain>cv. Columbia</strain>
        <strain>cv. Landsberg erecta</strain>
    </source>
</reference>
<reference key="3">
    <citation type="journal article" date="1999" name="Nature">
        <title>Sequence and analysis of chromosome 2 of the plant Arabidopsis thaliana.</title>
        <authorList>
            <person name="Lin X."/>
            <person name="Kaul S."/>
            <person name="Rounsley S.D."/>
            <person name="Shea T.P."/>
            <person name="Benito M.-I."/>
            <person name="Town C.D."/>
            <person name="Fujii C.Y."/>
            <person name="Mason T.M."/>
            <person name="Bowman C.L."/>
            <person name="Barnstead M.E."/>
            <person name="Feldblyum T.V."/>
            <person name="Buell C.R."/>
            <person name="Ketchum K.A."/>
            <person name="Lee J.J."/>
            <person name="Ronning C.M."/>
            <person name="Koo H.L."/>
            <person name="Moffat K.S."/>
            <person name="Cronin L.A."/>
            <person name="Shen M."/>
            <person name="Pai G."/>
            <person name="Van Aken S."/>
            <person name="Umayam L."/>
            <person name="Tallon L.J."/>
            <person name="Gill J.E."/>
            <person name="Adams M.D."/>
            <person name="Carrera A.J."/>
            <person name="Creasy T.H."/>
            <person name="Goodman H.M."/>
            <person name="Somerville C.R."/>
            <person name="Copenhaver G.P."/>
            <person name="Preuss D."/>
            <person name="Nierman W.C."/>
            <person name="White O."/>
            <person name="Eisen J.A."/>
            <person name="Salzberg S.L."/>
            <person name="Fraser C.M."/>
            <person name="Venter J.C."/>
        </authorList>
    </citation>
    <scope>NUCLEOTIDE SEQUENCE [LARGE SCALE GENOMIC DNA]</scope>
    <source>
        <strain>cv. Columbia</strain>
    </source>
</reference>
<reference key="4">
    <citation type="journal article" date="2017" name="Plant J.">
        <title>Araport11: a complete reannotation of the Arabidopsis thaliana reference genome.</title>
        <authorList>
            <person name="Cheng C.Y."/>
            <person name="Krishnakumar V."/>
            <person name="Chan A.P."/>
            <person name="Thibaud-Nissen F."/>
            <person name="Schobel S."/>
            <person name="Town C.D."/>
        </authorList>
    </citation>
    <scope>GENOME REANNOTATION</scope>
    <source>
        <strain>cv. Columbia</strain>
    </source>
</reference>
<reference key="5">
    <citation type="journal article" date="2003" name="Science">
        <title>Empirical analysis of transcriptional activity in the Arabidopsis genome.</title>
        <authorList>
            <person name="Yamada K."/>
            <person name="Lim J."/>
            <person name="Dale J.M."/>
            <person name="Chen H."/>
            <person name="Shinn P."/>
            <person name="Palm C.J."/>
            <person name="Southwick A.M."/>
            <person name="Wu H.C."/>
            <person name="Kim C.J."/>
            <person name="Nguyen M."/>
            <person name="Pham P.K."/>
            <person name="Cheuk R.F."/>
            <person name="Karlin-Newmann G."/>
            <person name="Liu S.X."/>
            <person name="Lam B."/>
            <person name="Sakano H."/>
            <person name="Wu T."/>
            <person name="Yu G."/>
            <person name="Miranda M."/>
            <person name="Quach H.L."/>
            <person name="Tripp M."/>
            <person name="Chang C.H."/>
            <person name="Lee J.M."/>
            <person name="Toriumi M.J."/>
            <person name="Chan M.M."/>
            <person name="Tang C.C."/>
            <person name="Onodera C.S."/>
            <person name="Deng J.M."/>
            <person name="Akiyama K."/>
            <person name="Ansari Y."/>
            <person name="Arakawa T."/>
            <person name="Banh J."/>
            <person name="Banno F."/>
            <person name="Bowser L."/>
            <person name="Brooks S.Y."/>
            <person name="Carninci P."/>
            <person name="Chao Q."/>
            <person name="Choy N."/>
            <person name="Enju A."/>
            <person name="Goldsmith A.D."/>
            <person name="Gurjal M."/>
            <person name="Hansen N.F."/>
            <person name="Hayashizaki Y."/>
            <person name="Johnson-Hopson C."/>
            <person name="Hsuan V.W."/>
            <person name="Iida K."/>
            <person name="Karnes M."/>
            <person name="Khan S."/>
            <person name="Koesema E."/>
            <person name="Ishida J."/>
            <person name="Jiang P.X."/>
            <person name="Jones T."/>
            <person name="Kawai J."/>
            <person name="Kamiya A."/>
            <person name="Meyers C."/>
            <person name="Nakajima M."/>
            <person name="Narusaka M."/>
            <person name="Seki M."/>
            <person name="Sakurai T."/>
            <person name="Satou M."/>
            <person name="Tamse R."/>
            <person name="Vaysberg M."/>
            <person name="Wallender E.K."/>
            <person name="Wong C."/>
            <person name="Yamamura Y."/>
            <person name="Yuan S."/>
            <person name="Shinozaki K."/>
            <person name="Davis R.W."/>
            <person name="Theologis A."/>
            <person name="Ecker J.R."/>
        </authorList>
    </citation>
    <scope>NUCLEOTIDE SEQUENCE [LARGE SCALE MRNA]</scope>
    <source>
        <strain>cv. Columbia</strain>
    </source>
</reference>
<reference key="6">
    <citation type="submission" date="2002-03" db="EMBL/GenBank/DDBJ databases">
        <title>Full-length cDNA from Arabidopsis thaliana.</title>
        <authorList>
            <person name="Brover V.V."/>
            <person name="Troukhan M.E."/>
            <person name="Alexandrov N.A."/>
            <person name="Lu Y.-P."/>
            <person name="Flavell R.B."/>
            <person name="Feldmann K.A."/>
        </authorList>
    </citation>
    <scope>NUCLEOTIDE SEQUENCE [LARGE SCALE MRNA]</scope>
</reference>
<reference key="7">
    <citation type="journal article" date="1996" name="Plant J.">
        <title>Further progress towards a catalogue of all Arabidopsis genes: analysis of a set of 5000 non-redundant ESTs.</title>
        <authorList>
            <person name="Cooke R."/>
            <person name="Raynal M."/>
            <person name="Laudie M."/>
            <person name="Grellet F."/>
            <person name="Delseny M."/>
            <person name="Morris P.-C."/>
            <person name="Guerrier D."/>
            <person name="Giraudat J."/>
            <person name="Quigley F."/>
            <person name="Clabault G."/>
            <person name="Li Y.-F."/>
            <person name="Mache R."/>
            <person name="Krivitzky M."/>
            <person name="Gy I.J.-J."/>
            <person name="Kreis M."/>
            <person name="Lecharny A."/>
            <person name="Parmentier Y."/>
            <person name="Marbach J."/>
            <person name="Fleck J."/>
            <person name="Clement B."/>
            <person name="Philipps G."/>
            <person name="Herve C."/>
            <person name="Bardet C."/>
            <person name="Tremousaygue D."/>
            <person name="Lescure B."/>
            <person name="Lacomme C."/>
            <person name="Roby D."/>
            <person name="Jourjon M.-F."/>
            <person name="Chabrier P."/>
            <person name="Charpenteau J.-L."/>
            <person name="Desprez T."/>
            <person name="Amselem J."/>
            <person name="Chiapello H."/>
            <person name="Hoefte H."/>
        </authorList>
    </citation>
    <scope>NUCLEOTIDE SEQUENCE [LARGE SCALE MRNA] OF 1-108</scope>
    <source>
        <strain>cv. Columbia</strain>
        <tissue>Seedling</tissue>
    </source>
</reference>
<gene>
    <name type="ordered locus">At2g44790</name>
    <name type="ORF">F16B22.32</name>
</gene>
<feature type="signal peptide" evidence="1">
    <location>
        <begin position="1"/>
        <end position="29"/>
    </location>
</feature>
<feature type="chain" id="PRO_0000002868" description="Uclacyanin-2">
    <location>
        <begin position="30"/>
        <end position="178"/>
    </location>
</feature>
<feature type="propeptide" id="PRO_0000002869" description="Removed in mature form" evidence="4">
    <location>
        <begin position="179"/>
        <end position="202"/>
    </location>
</feature>
<feature type="domain" description="Phytocyanin" evidence="2">
    <location>
        <begin position="30"/>
        <end position="126"/>
    </location>
</feature>
<feature type="region of interest" description="Disordered" evidence="3">
    <location>
        <begin position="129"/>
        <end position="181"/>
    </location>
</feature>
<feature type="compositionally biased region" description="Low complexity" evidence="3">
    <location>
        <begin position="141"/>
        <end position="169"/>
    </location>
</feature>
<feature type="binding site" evidence="2">
    <location>
        <position position="65"/>
    </location>
    <ligand>
        <name>Cu cation</name>
        <dbReference type="ChEBI" id="CHEBI:23378"/>
    </ligand>
</feature>
<feature type="binding site" evidence="2">
    <location>
        <position position="106"/>
    </location>
    <ligand>
        <name>Cu cation</name>
        <dbReference type="ChEBI" id="CHEBI:23378"/>
    </ligand>
</feature>
<feature type="binding site" evidence="2">
    <location>
        <position position="111"/>
    </location>
    <ligand>
        <name>Cu cation</name>
        <dbReference type="ChEBI" id="CHEBI:23378"/>
    </ligand>
</feature>
<feature type="binding site" evidence="2">
    <location>
        <position position="118"/>
    </location>
    <ligand>
        <name>Cu cation</name>
        <dbReference type="ChEBI" id="CHEBI:23378"/>
    </ligand>
</feature>
<feature type="lipid moiety-binding region" description="GPI-anchor amidated serine" evidence="1">
    <location>
        <position position="178"/>
    </location>
</feature>
<feature type="glycosylation site" description="N-linked (GlcNAc...) asparagine" evidence="1">
    <location>
        <position position="86"/>
    </location>
</feature>
<feature type="sequence variant" description="In strain: cv. Landsberg erecta.">
    <original>RT</original>
    <variation>SL</variation>
    <location>
        <begin position="113"/>
        <end position="114"/>
    </location>
</feature>
<feature type="sequence conflict" description="In Ref. 2; AAB47973." evidence="4" ref="2">
    <original>A</original>
    <variation>G</variation>
    <location>
        <position position="80"/>
    </location>
</feature>
<feature type="sequence conflict" description="In Ref. 2; AAB47973." evidence="4" ref="2">
    <original>P</original>
    <variation>T</variation>
    <location>
        <position position="109"/>
    </location>
</feature>
<feature type="sequence conflict" description="In Ref. 1; AAC32039 and 2; AAB47973." evidence="4" ref="1 2">
    <original>RTN</original>
    <variation>S</variation>
    <location>
        <begin position="113"/>
        <end position="115"/>
    </location>
</feature>
<feature type="sequence conflict" description="In Ref. 2; AAB50232/AAB47973." evidence="4" ref="2">
    <original>GPPA</original>
    <variation>DLR</variation>
    <location>
        <begin position="130"/>
        <end position="133"/>
    </location>
</feature>
<organism>
    <name type="scientific">Arabidopsis thaliana</name>
    <name type="common">Mouse-ear cress</name>
    <dbReference type="NCBI Taxonomy" id="3702"/>
    <lineage>
        <taxon>Eukaryota</taxon>
        <taxon>Viridiplantae</taxon>
        <taxon>Streptophyta</taxon>
        <taxon>Embryophyta</taxon>
        <taxon>Tracheophyta</taxon>
        <taxon>Spermatophyta</taxon>
        <taxon>Magnoliopsida</taxon>
        <taxon>eudicotyledons</taxon>
        <taxon>Gunneridae</taxon>
        <taxon>Pentapetalae</taxon>
        <taxon>rosids</taxon>
        <taxon>malvids</taxon>
        <taxon>Brassicales</taxon>
        <taxon>Brassicaceae</taxon>
        <taxon>Camelineae</taxon>
        <taxon>Arabidopsis</taxon>
    </lineage>
</organism>
<name>BCB2_ARATH</name>
<comment type="function">
    <text>Probably acts as an electron carrier involved in oxygen activation and/or lignin formation.</text>
</comment>
<comment type="subcellular location">
    <subcellularLocation>
        <location>Cell membrane</location>
        <topology>Lipid-anchor</topology>
        <topology>GPI-anchor</topology>
    </subcellularLocation>
</comment>
<comment type="sequence caution" evidence="4">
    <conflict type="frameshift">
        <sequence resource="EMBL-CDS" id="AAC32039"/>
    </conflict>
</comment>
<comment type="sequence caution" evidence="4">
    <conflict type="frameshift">
        <sequence resource="EMBL-CDS" id="CAA81189"/>
    </conflict>
</comment>
<protein>
    <recommendedName>
        <fullName>Uclacyanin-2</fullName>
    </recommendedName>
    <alternativeName>
        <fullName>Blue copper-binding protein II</fullName>
        <shortName>BCB II</shortName>
    </alternativeName>
    <alternativeName>
        <fullName>Phytocyanin 2</fullName>
    </alternativeName>
    <alternativeName>
        <fullName>Uclacyanin-II</fullName>
    </alternativeName>
</protein>
<proteinExistence type="evidence at transcript level"/>
<accession>O80517</accession>
<accession>O03987</accession>
<accession>O82082</accession>
<accession>Q39252</accession>
<accession>Q42071</accession>
<accession>Q8LDL7</accession>